<feature type="chain" id="PRO_1000011275" description="Phosphopantetheine adenylyltransferase">
    <location>
        <begin position="1"/>
        <end position="167"/>
    </location>
</feature>
<feature type="binding site" evidence="1">
    <location>
        <begin position="13"/>
        <end position="14"/>
    </location>
    <ligand>
        <name>ATP</name>
        <dbReference type="ChEBI" id="CHEBI:30616"/>
    </ligand>
</feature>
<feature type="binding site" evidence="1">
    <location>
        <position position="13"/>
    </location>
    <ligand>
        <name>substrate</name>
    </ligand>
</feature>
<feature type="binding site" evidence="1">
    <location>
        <position position="21"/>
    </location>
    <ligand>
        <name>ATP</name>
        <dbReference type="ChEBI" id="CHEBI:30616"/>
    </ligand>
</feature>
<feature type="binding site" evidence="1">
    <location>
        <position position="45"/>
    </location>
    <ligand>
        <name>substrate</name>
    </ligand>
</feature>
<feature type="binding site" evidence="1">
    <location>
        <position position="78"/>
    </location>
    <ligand>
        <name>substrate</name>
    </ligand>
</feature>
<feature type="binding site" evidence="1">
    <location>
        <position position="92"/>
    </location>
    <ligand>
        <name>substrate</name>
    </ligand>
</feature>
<feature type="binding site" evidence="1">
    <location>
        <begin position="93"/>
        <end position="95"/>
    </location>
    <ligand>
        <name>ATP</name>
        <dbReference type="ChEBI" id="CHEBI:30616"/>
    </ligand>
</feature>
<feature type="binding site" evidence="1">
    <location>
        <position position="103"/>
    </location>
    <ligand>
        <name>ATP</name>
        <dbReference type="ChEBI" id="CHEBI:30616"/>
    </ligand>
</feature>
<feature type="binding site" evidence="1">
    <location>
        <begin position="128"/>
        <end position="134"/>
    </location>
    <ligand>
        <name>ATP</name>
        <dbReference type="ChEBI" id="CHEBI:30616"/>
    </ligand>
</feature>
<feature type="site" description="Transition state stabilizer" evidence="1">
    <location>
        <position position="21"/>
    </location>
</feature>
<sequence>MNINNRIGIYPGTFDPITFGHIDIIKRACKLVDRLIIGVAENINKHTTFDAKLRTSMAENEIKRLEIDVDVVSFNGLLVKFAKEQNASVIIRGLRAVSDFDYEFQMSWVNYKLLPEIETIFLPASEDTQFISSSFVKEIARLGESVSKFVSVGVQKELINLNRIGSE</sequence>
<protein>
    <recommendedName>
        <fullName evidence="1">Phosphopantetheine adenylyltransferase</fullName>
        <ecNumber evidence="1">2.7.7.3</ecNumber>
    </recommendedName>
    <alternativeName>
        <fullName evidence="1">Dephospho-CoA pyrophosphorylase</fullName>
    </alternativeName>
    <alternativeName>
        <fullName evidence="1">Pantetheine-phosphate adenylyltransferase</fullName>
        <shortName evidence="1">PPAT</shortName>
    </alternativeName>
</protein>
<name>COAD_WOLTR</name>
<accession>Q5GRI5</accession>
<evidence type="ECO:0000255" key="1">
    <source>
        <dbReference type="HAMAP-Rule" id="MF_00151"/>
    </source>
</evidence>
<keyword id="KW-0067">ATP-binding</keyword>
<keyword id="KW-0173">Coenzyme A biosynthesis</keyword>
<keyword id="KW-0963">Cytoplasm</keyword>
<keyword id="KW-0460">Magnesium</keyword>
<keyword id="KW-0547">Nucleotide-binding</keyword>
<keyword id="KW-0548">Nucleotidyltransferase</keyword>
<keyword id="KW-1185">Reference proteome</keyword>
<keyword id="KW-0808">Transferase</keyword>
<comment type="function">
    <text evidence="1">Reversibly transfers an adenylyl group from ATP to 4'-phosphopantetheine, yielding dephospho-CoA (dPCoA) and pyrophosphate.</text>
</comment>
<comment type="catalytic activity">
    <reaction evidence="1">
        <text>(R)-4'-phosphopantetheine + ATP + H(+) = 3'-dephospho-CoA + diphosphate</text>
        <dbReference type="Rhea" id="RHEA:19801"/>
        <dbReference type="ChEBI" id="CHEBI:15378"/>
        <dbReference type="ChEBI" id="CHEBI:30616"/>
        <dbReference type="ChEBI" id="CHEBI:33019"/>
        <dbReference type="ChEBI" id="CHEBI:57328"/>
        <dbReference type="ChEBI" id="CHEBI:61723"/>
        <dbReference type="EC" id="2.7.7.3"/>
    </reaction>
</comment>
<comment type="cofactor">
    <cofactor evidence="1">
        <name>Mg(2+)</name>
        <dbReference type="ChEBI" id="CHEBI:18420"/>
    </cofactor>
</comment>
<comment type="pathway">
    <text evidence="1">Cofactor biosynthesis; coenzyme A biosynthesis; CoA from (R)-pantothenate: step 4/5.</text>
</comment>
<comment type="subunit">
    <text evidence="1">Homohexamer.</text>
</comment>
<comment type="subcellular location">
    <subcellularLocation>
        <location evidence="1">Cytoplasm</location>
    </subcellularLocation>
</comment>
<comment type="similarity">
    <text evidence="1">Belongs to the bacterial CoaD family.</text>
</comment>
<gene>
    <name evidence="1" type="primary">coaD</name>
    <name type="ordered locus">Wbm0801</name>
</gene>
<reference key="1">
    <citation type="journal article" date="2005" name="PLoS Biol.">
        <title>The Wolbachia genome of Brugia malayi: endosymbiont evolution within a human pathogenic nematode.</title>
        <authorList>
            <person name="Foster J."/>
            <person name="Ganatra M."/>
            <person name="Kamal I."/>
            <person name="Ware J."/>
            <person name="Makarova K."/>
            <person name="Ivanova N."/>
            <person name="Bhattacharyya A."/>
            <person name="Kapatral V."/>
            <person name="Kumar S."/>
            <person name="Posfai J."/>
            <person name="Vincze T."/>
            <person name="Ingram J."/>
            <person name="Moran L."/>
            <person name="Lapidus A."/>
            <person name="Omelchenko M."/>
            <person name="Kyrpides N."/>
            <person name="Ghedin E."/>
            <person name="Wang S."/>
            <person name="Goltsman E."/>
            <person name="Joukov V."/>
            <person name="Ostrovskaya O."/>
            <person name="Tsukerman K."/>
            <person name="Mazur M."/>
            <person name="Comb D."/>
            <person name="Koonin E."/>
            <person name="Slatko B."/>
        </authorList>
    </citation>
    <scope>NUCLEOTIDE SEQUENCE [LARGE SCALE GENOMIC DNA]</scope>
    <source>
        <strain>TRS</strain>
    </source>
</reference>
<proteinExistence type="inferred from homology"/>
<organism>
    <name type="scientific">Wolbachia sp. subsp. Brugia malayi (strain TRS)</name>
    <dbReference type="NCBI Taxonomy" id="292805"/>
    <lineage>
        <taxon>Bacteria</taxon>
        <taxon>Pseudomonadati</taxon>
        <taxon>Pseudomonadota</taxon>
        <taxon>Alphaproteobacteria</taxon>
        <taxon>Rickettsiales</taxon>
        <taxon>Anaplasmataceae</taxon>
        <taxon>Wolbachieae</taxon>
        <taxon>Wolbachia</taxon>
    </lineage>
</organism>
<dbReference type="EC" id="2.7.7.3" evidence="1"/>
<dbReference type="EMBL" id="AE017321">
    <property type="protein sequence ID" value="AAW71389.1"/>
    <property type="molecule type" value="Genomic_DNA"/>
</dbReference>
<dbReference type="RefSeq" id="WP_011256998.1">
    <property type="nucleotide sequence ID" value="NC_006833.1"/>
</dbReference>
<dbReference type="SMR" id="Q5GRI5"/>
<dbReference type="STRING" id="292805.Wbm0801"/>
<dbReference type="KEGG" id="wbm:Wbm0801"/>
<dbReference type="eggNOG" id="COG0669">
    <property type="taxonomic scope" value="Bacteria"/>
</dbReference>
<dbReference type="HOGENOM" id="CLU_100149_0_1_5"/>
<dbReference type="UniPathway" id="UPA00241">
    <property type="reaction ID" value="UER00355"/>
</dbReference>
<dbReference type="Proteomes" id="UP000000534">
    <property type="component" value="Chromosome"/>
</dbReference>
<dbReference type="GO" id="GO:0005737">
    <property type="term" value="C:cytoplasm"/>
    <property type="evidence" value="ECO:0007669"/>
    <property type="project" value="UniProtKB-SubCell"/>
</dbReference>
<dbReference type="GO" id="GO:0005524">
    <property type="term" value="F:ATP binding"/>
    <property type="evidence" value="ECO:0007669"/>
    <property type="project" value="UniProtKB-KW"/>
</dbReference>
<dbReference type="GO" id="GO:0004595">
    <property type="term" value="F:pantetheine-phosphate adenylyltransferase activity"/>
    <property type="evidence" value="ECO:0007669"/>
    <property type="project" value="UniProtKB-UniRule"/>
</dbReference>
<dbReference type="GO" id="GO:0015937">
    <property type="term" value="P:coenzyme A biosynthetic process"/>
    <property type="evidence" value="ECO:0007669"/>
    <property type="project" value="UniProtKB-UniRule"/>
</dbReference>
<dbReference type="CDD" id="cd02163">
    <property type="entry name" value="PPAT"/>
    <property type="match status" value="1"/>
</dbReference>
<dbReference type="Gene3D" id="3.40.50.620">
    <property type="entry name" value="HUPs"/>
    <property type="match status" value="1"/>
</dbReference>
<dbReference type="HAMAP" id="MF_00151">
    <property type="entry name" value="PPAT_bact"/>
    <property type="match status" value="1"/>
</dbReference>
<dbReference type="InterPro" id="IPR004821">
    <property type="entry name" value="Cyt_trans-like"/>
</dbReference>
<dbReference type="InterPro" id="IPR001980">
    <property type="entry name" value="PPAT"/>
</dbReference>
<dbReference type="InterPro" id="IPR014729">
    <property type="entry name" value="Rossmann-like_a/b/a_fold"/>
</dbReference>
<dbReference type="NCBIfam" id="TIGR01510">
    <property type="entry name" value="coaD_prev_kdtB"/>
    <property type="match status" value="1"/>
</dbReference>
<dbReference type="NCBIfam" id="TIGR00125">
    <property type="entry name" value="cyt_tran_rel"/>
    <property type="match status" value="1"/>
</dbReference>
<dbReference type="PANTHER" id="PTHR21342">
    <property type="entry name" value="PHOSPHOPANTETHEINE ADENYLYLTRANSFERASE"/>
    <property type="match status" value="1"/>
</dbReference>
<dbReference type="PANTHER" id="PTHR21342:SF1">
    <property type="entry name" value="PHOSPHOPANTETHEINE ADENYLYLTRANSFERASE"/>
    <property type="match status" value="1"/>
</dbReference>
<dbReference type="Pfam" id="PF01467">
    <property type="entry name" value="CTP_transf_like"/>
    <property type="match status" value="1"/>
</dbReference>
<dbReference type="PRINTS" id="PR01020">
    <property type="entry name" value="LPSBIOSNTHSS"/>
</dbReference>
<dbReference type="SUPFAM" id="SSF52374">
    <property type="entry name" value="Nucleotidylyl transferase"/>
    <property type="match status" value="1"/>
</dbReference>